<protein>
    <recommendedName>
        <fullName evidence="1">Acireductone dioxygenase</fullName>
    </recommendedName>
    <alternativeName>
        <fullName evidence="1">1,2-dihydroxy-3-keto-5-methylthiopentene dioxygenase</fullName>
        <shortName evidence="1">DHK-MTPene dioxygenase</shortName>
    </alternativeName>
    <alternativeName>
        <fullName evidence="1">Acireductone dioxygenase (Fe(2+)-requiring)</fullName>
        <shortName evidence="1">ARD'</shortName>
        <shortName evidence="1">Fe-ARD</shortName>
        <ecNumber evidence="1">1.13.11.54</ecNumber>
    </alternativeName>
    <alternativeName>
        <fullName evidence="1">Acireductone dioxygenase (Ni(2+)-requiring)</fullName>
        <shortName evidence="1">ARD</shortName>
        <shortName evidence="1">Ni-ARD</shortName>
        <ecNumber evidence="1">1.13.11.53</ecNumber>
    </alternativeName>
</protein>
<keyword id="KW-0028">Amino-acid biosynthesis</keyword>
<keyword id="KW-0223">Dioxygenase</keyword>
<keyword id="KW-0408">Iron</keyword>
<keyword id="KW-0479">Metal-binding</keyword>
<keyword id="KW-0486">Methionine biosynthesis</keyword>
<keyword id="KW-0533">Nickel</keyword>
<keyword id="KW-0560">Oxidoreductase</keyword>
<keyword id="KW-1185">Reference proteome</keyword>
<name>MTND_SYNPW</name>
<accession>A5GJ71</accession>
<organism>
    <name type="scientific">Synechococcus sp. (strain WH7803)</name>
    <dbReference type="NCBI Taxonomy" id="32051"/>
    <lineage>
        <taxon>Bacteria</taxon>
        <taxon>Bacillati</taxon>
        <taxon>Cyanobacteriota</taxon>
        <taxon>Cyanophyceae</taxon>
        <taxon>Synechococcales</taxon>
        <taxon>Synechococcaceae</taxon>
        <taxon>Synechococcus</taxon>
    </lineage>
</organism>
<reference key="1">
    <citation type="submission" date="2006-05" db="EMBL/GenBank/DDBJ databases">
        <authorList>
            <consortium name="Genoscope"/>
        </authorList>
    </citation>
    <scope>NUCLEOTIDE SEQUENCE [LARGE SCALE GENOMIC DNA]</scope>
    <source>
        <strain>WH7803</strain>
    </source>
</reference>
<gene>
    <name evidence="1" type="primary">mtnD</name>
    <name type="ordered locus">SynWH7803_0560</name>
</gene>
<sequence>MSELSIYSEQGGEPVFSTLDSARIQHELSLRGIAFDRCASKAEIALDADQADILSTYAEEIHRIQALGDYPTVDAIRMKPDHPDRQALRQKFLSEHTHAEDEVRLFVEGRGLFCLHIKSEVLQVTCETNDWISVPAGTRHWFDMGEKPYFCAIRFFNNPNGWVANFTNDPIAERFSKLRD</sequence>
<dbReference type="EC" id="1.13.11.54" evidence="1"/>
<dbReference type="EC" id="1.13.11.53" evidence="1"/>
<dbReference type="EMBL" id="CT971583">
    <property type="protein sequence ID" value="CAK22986.1"/>
    <property type="molecule type" value="Genomic_DNA"/>
</dbReference>
<dbReference type="SMR" id="A5GJ71"/>
<dbReference type="STRING" id="32051.SynWH7803_0560"/>
<dbReference type="KEGG" id="syx:SynWH7803_0560"/>
<dbReference type="eggNOG" id="COG1791">
    <property type="taxonomic scope" value="Bacteria"/>
</dbReference>
<dbReference type="HOGENOM" id="CLU_125400_0_0_3"/>
<dbReference type="OrthoDB" id="9795636at2"/>
<dbReference type="UniPathway" id="UPA00904">
    <property type="reaction ID" value="UER00878"/>
</dbReference>
<dbReference type="Proteomes" id="UP000001566">
    <property type="component" value="Chromosome"/>
</dbReference>
<dbReference type="GO" id="GO:0010308">
    <property type="term" value="F:acireductone dioxygenase (Ni2+-requiring) activity"/>
    <property type="evidence" value="ECO:0007669"/>
    <property type="project" value="UniProtKB-UniRule"/>
</dbReference>
<dbReference type="GO" id="GO:0010309">
    <property type="term" value="F:acireductone dioxygenase [iron(II)-requiring] activity"/>
    <property type="evidence" value="ECO:0007669"/>
    <property type="project" value="UniProtKB-UniRule"/>
</dbReference>
<dbReference type="GO" id="GO:0005506">
    <property type="term" value="F:iron ion binding"/>
    <property type="evidence" value="ECO:0007669"/>
    <property type="project" value="UniProtKB-UniRule"/>
</dbReference>
<dbReference type="GO" id="GO:0016151">
    <property type="term" value="F:nickel cation binding"/>
    <property type="evidence" value="ECO:0007669"/>
    <property type="project" value="UniProtKB-UniRule"/>
</dbReference>
<dbReference type="GO" id="GO:0019509">
    <property type="term" value="P:L-methionine salvage from methylthioadenosine"/>
    <property type="evidence" value="ECO:0007669"/>
    <property type="project" value="UniProtKB-UniRule"/>
</dbReference>
<dbReference type="GO" id="GO:0019284">
    <property type="term" value="P:L-methionine salvage from S-adenosylmethionine"/>
    <property type="evidence" value="ECO:0007669"/>
    <property type="project" value="InterPro"/>
</dbReference>
<dbReference type="CDD" id="cd02232">
    <property type="entry name" value="cupin_ARD"/>
    <property type="match status" value="1"/>
</dbReference>
<dbReference type="Gene3D" id="2.60.120.10">
    <property type="entry name" value="Jelly Rolls"/>
    <property type="match status" value="1"/>
</dbReference>
<dbReference type="HAMAP" id="MF_01682">
    <property type="entry name" value="Salvage_MtnD"/>
    <property type="match status" value="1"/>
</dbReference>
<dbReference type="InterPro" id="IPR004313">
    <property type="entry name" value="ARD"/>
</dbReference>
<dbReference type="InterPro" id="IPR023956">
    <property type="entry name" value="ARD_bac"/>
</dbReference>
<dbReference type="InterPro" id="IPR014710">
    <property type="entry name" value="RmlC-like_jellyroll"/>
</dbReference>
<dbReference type="InterPro" id="IPR011051">
    <property type="entry name" value="RmlC_Cupin_sf"/>
</dbReference>
<dbReference type="PANTHER" id="PTHR23418">
    <property type="entry name" value="ACIREDUCTONE DIOXYGENASE"/>
    <property type="match status" value="1"/>
</dbReference>
<dbReference type="PANTHER" id="PTHR23418:SF0">
    <property type="entry name" value="ACIREDUCTONE DIOXYGENASE"/>
    <property type="match status" value="1"/>
</dbReference>
<dbReference type="Pfam" id="PF03079">
    <property type="entry name" value="ARD"/>
    <property type="match status" value="1"/>
</dbReference>
<dbReference type="SUPFAM" id="SSF51182">
    <property type="entry name" value="RmlC-like cupins"/>
    <property type="match status" value="1"/>
</dbReference>
<proteinExistence type="inferred from homology"/>
<comment type="function">
    <text evidence="1">Catalyzes 2 different reactions between oxygen and the acireductone 1,2-dihydroxy-3-keto-5-methylthiopentene (DHK-MTPene) depending upon the metal bound in the active site. Fe-containing acireductone dioxygenase (Fe-ARD) produces formate and 2-keto-4-methylthiobutyrate (KMTB), the alpha-ketoacid precursor of methionine in the methionine recycle pathway. Ni-containing acireductone dioxygenase (Ni-ARD) produces methylthiopropionate, carbon monoxide and formate, and does not lie on the methionine recycle pathway.</text>
</comment>
<comment type="catalytic activity">
    <reaction evidence="1">
        <text>1,2-dihydroxy-5-(methylsulfanyl)pent-1-en-3-one + O2 = 3-(methylsulfanyl)propanoate + CO + formate + 2 H(+)</text>
        <dbReference type="Rhea" id="RHEA:14161"/>
        <dbReference type="ChEBI" id="CHEBI:15378"/>
        <dbReference type="ChEBI" id="CHEBI:15379"/>
        <dbReference type="ChEBI" id="CHEBI:15740"/>
        <dbReference type="ChEBI" id="CHEBI:17245"/>
        <dbReference type="ChEBI" id="CHEBI:49016"/>
        <dbReference type="ChEBI" id="CHEBI:49252"/>
        <dbReference type="EC" id="1.13.11.53"/>
    </reaction>
</comment>
<comment type="catalytic activity">
    <reaction evidence="1">
        <text>1,2-dihydroxy-5-(methylsulfanyl)pent-1-en-3-one + O2 = 4-methylsulfanyl-2-oxobutanoate + formate + 2 H(+)</text>
        <dbReference type="Rhea" id="RHEA:24504"/>
        <dbReference type="ChEBI" id="CHEBI:15378"/>
        <dbReference type="ChEBI" id="CHEBI:15379"/>
        <dbReference type="ChEBI" id="CHEBI:15740"/>
        <dbReference type="ChEBI" id="CHEBI:16723"/>
        <dbReference type="ChEBI" id="CHEBI:49252"/>
        <dbReference type="EC" id="1.13.11.54"/>
    </reaction>
</comment>
<comment type="cofactor">
    <cofactor evidence="1">
        <name>Fe(2+)</name>
        <dbReference type="ChEBI" id="CHEBI:29033"/>
    </cofactor>
    <text evidence="1">Binds 1 Fe(2+) cation per monomer.</text>
</comment>
<comment type="cofactor">
    <cofactor evidence="1">
        <name>Ni(2+)</name>
        <dbReference type="ChEBI" id="CHEBI:49786"/>
    </cofactor>
    <text evidence="1">Binds 1 nickel ion per monomer.</text>
</comment>
<comment type="pathway">
    <text evidence="1">Amino-acid biosynthesis; L-methionine biosynthesis via salvage pathway; L-methionine from S-methyl-5-thio-alpha-D-ribose 1-phosphate: step 5/6.</text>
</comment>
<comment type="subunit">
    <text evidence="1">Monomer.</text>
</comment>
<comment type="similarity">
    <text evidence="1">Belongs to the acireductone dioxygenase (ARD) family.</text>
</comment>
<feature type="chain" id="PRO_0000359243" description="Acireductone dioxygenase">
    <location>
        <begin position="1"/>
        <end position="180"/>
    </location>
</feature>
<feature type="binding site" evidence="1">
    <location>
        <position position="96"/>
    </location>
    <ligand>
        <name>Fe(2+)</name>
        <dbReference type="ChEBI" id="CHEBI:29033"/>
    </ligand>
</feature>
<feature type="binding site" evidence="1">
    <location>
        <position position="96"/>
    </location>
    <ligand>
        <name>Ni(2+)</name>
        <dbReference type="ChEBI" id="CHEBI:49786"/>
    </ligand>
</feature>
<feature type="binding site" evidence="1">
    <location>
        <position position="98"/>
    </location>
    <ligand>
        <name>Fe(2+)</name>
        <dbReference type="ChEBI" id="CHEBI:29033"/>
    </ligand>
</feature>
<feature type="binding site" evidence="1">
    <location>
        <position position="98"/>
    </location>
    <ligand>
        <name>Ni(2+)</name>
        <dbReference type="ChEBI" id="CHEBI:49786"/>
    </ligand>
</feature>
<feature type="binding site" evidence="1">
    <location>
        <position position="102"/>
    </location>
    <ligand>
        <name>Fe(2+)</name>
        <dbReference type="ChEBI" id="CHEBI:29033"/>
    </ligand>
</feature>
<feature type="binding site" evidence="1">
    <location>
        <position position="102"/>
    </location>
    <ligand>
        <name>Ni(2+)</name>
        <dbReference type="ChEBI" id="CHEBI:49786"/>
    </ligand>
</feature>
<feature type="binding site" evidence="1">
    <location>
        <position position="140"/>
    </location>
    <ligand>
        <name>Fe(2+)</name>
        <dbReference type="ChEBI" id="CHEBI:29033"/>
    </ligand>
</feature>
<feature type="binding site" evidence="1">
    <location>
        <position position="140"/>
    </location>
    <ligand>
        <name>Ni(2+)</name>
        <dbReference type="ChEBI" id="CHEBI:49786"/>
    </ligand>
</feature>
<feature type="site" description="May play a role in metal incorporation in vivo" evidence="1">
    <location>
        <position position="95"/>
    </location>
</feature>
<feature type="site" description="May play a role in transmitting local conformational changes" evidence="1">
    <location>
        <position position="101"/>
    </location>
</feature>
<feature type="site" description="Important to generate the dianion" evidence="1">
    <location>
        <position position="104"/>
    </location>
</feature>
<evidence type="ECO:0000255" key="1">
    <source>
        <dbReference type="HAMAP-Rule" id="MF_01682"/>
    </source>
</evidence>